<gene>
    <name evidence="1" type="primary">aroB</name>
    <name type="ordered locus">Bcep18194_A3490</name>
</gene>
<dbReference type="EC" id="4.2.3.4" evidence="1"/>
<dbReference type="EMBL" id="CP000151">
    <property type="protein sequence ID" value="ABB07092.1"/>
    <property type="molecule type" value="Genomic_DNA"/>
</dbReference>
<dbReference type="RefSeq" id="WP_011350695.1">
    <property type="nucleotide sequence ID" value="NC_007510.1"/>
</dbReference>
<dbReference type="SMR" id="Q39KC4"/>
<dbReference type="GeneID" id="45093407"/>
<dbReference type="KEGG" id="bur:Bcep18194_A3490"/>
<dbReference type="PATRIC" id="fig|482957.22.peg.333"/>
<dbReference type="HOGENOM" id="CLU_001201_0_2_4"/>
<dbReference type="UniPathway" id="UPA00053">
    <property type="reaction ID" value="UER00085"/>
</dbReference>
<dbReference type="Proteomes" id="UP000002705">
    <property type="component" value="Chromosome 1"/>
</dbReference>
<dbReference type="GO" id="GO:0005737">
    <property type="term" value="C:cytoplasm"/>
    <property type="evidence" value="ECO:0007669"/>
    <property type="project" value="UniProtKB-SubCell"/>
</dbReference>
<dbReference type="GO" id="GO:0003856">
    <property type="term" value="F:3-dehydroquinate synthase activity"/>
    <property type="evidence" value="ECO:0007669"/>
    <property type="project" value="UniProtKB-UniRule"/>
</dbReference>
<dbReference type="GO" id="GO:0046872">
    <property type="term" value="F:metal ion binding"/>
    <property type="evidence" value="ECO:0007669"/>
    <property type="project" value="UniProtKB-KW"/>
</dbReference>
<dbReference type="GO" id="GO:0000166">
    <property type="term" value="F:nucleotide binding"/>
    <property type="evidence" value="ECO:0007669"/>
    <property type="project" value="UniProtKB-KW"/>
</dbReference>
<dbReference type="GO" id="GO:0008652">
    <property type="term" value="P:amino acid biosynthetic process"/>
    <property type="evidence" value="ECO:0007669"/>
    <property type="project" value="UniProtKB-KW"/>
</dbReference>
<dbReference type="GO" id="GO:0009073">
    <property type="term" value="P:aromatic amino acid family biosynthetic process"/>
    <property type="evidence" value="ECO:0007669"/>
    <property type="project" value="UniProtKB-KW"/>
</dbReference>
<dbReference type="GO" id="GO:0009423">
    <property type="term" value="P:chorismate biosynthetic process"/>
    <property type="evidence" value="ECO:0007669"/>
    <property type="project" value="UniProtKB-UniRule"/>
</dbReference>
<dbReference type="CDD" id="cd08195">
    <property type="entry name" value="DHQS"/>
    <property type="match status" value="1"/>
</dbReference>
<dbReference type="FunFam" id="3.40.50.1970:FF:000001">
    <property type="entry name" value="3-dehydroquinate synthase"/>
    <property type="match status" value="1"/>
</dbReference>
<dbReference type="Gene3D" id="3.40.50.1970">
    <property type="match status" value="1"/>
</dbReference>
<dbReference type="Gene3D" id="1.20.1090.10">
    <property type="entry name" value="Dehydroquinate synthase-like - alpha domain"/>
    <property type="match status" value="1"/>
</dbReference>
<dbReference type="HAMAP" id="MF_00110">
    <property type="entry name" value="DHQ_synthase"/>
    <property type="match status" value="1"/>
</dbReference>
<dbReference type="InterPro" id="IPR050071">
    <property type="entry name" value="Dehydroquinate_synthase"/>
</dbReference>
<dbReference type="InterPro" id="IPR016037">
    <property type="entry name" value="DHQ_synth_AroB"/>
</dbReference>
<dbReference type="InterPro" id="IPR030963">
    <property type="entry name" value="DHQ_synth_fam"/>
</dbReference>
<dbReference type="InterPro" id="IPR030960">
    <property type="entry name" value="DHQS/DOIS_N"/>
</dbReference>
<dbReference type="InterPro" id="IPR056179">
    <property type="entry name" value="DHQS_C"/>
</dbReference>
<dbReference type="NCBIfam" id="TIGR01357">
    <property type="entry name" value="aroB"/>
    <property type="match status" value="1"/>
</dbReference>
<dbReference type="PANTHER" id="PTHR43622">
    <property type="entry name" value="3-DEHYDROQUINATE SYNTHASE"/>
    <property type="match status" value="1"/>
</dbReference>
<dbReference type="PANTHER" id="PTHR43622:SF7">
    <property type="entry name" value="3-DEHYDROQUINATE SYNTHASE, CHLOROPLASTIC"/>
    <property type="match status" value="1"/>
</dbReference>
<dbReference type="Pfam" id="PF01761">
    <property type="entry name" value="DHQ_synthase"/>
    <property type="match status" value="1"/>
</dbReference>
<dbReference type="Pfam" id="PF24621">
    <property type="entry name" value="DHQS_C"/>
    <property type="match status" value="1"/>
</dbReference>
<dbReference type="PIRSF" id="PIRSF001455">
    <property type="entry name" value="DHQ_synth"/>
    <property type="match status" value="1"/>
</dbReference>
<dbReference type="SUPFAM" id="SSF56796">
    <property type="entry name" value="Dehydroquinate synthase-like"/>
    <property type="match status" value="1"/>
</dbReference>
<feature type="chain" id="PRO_0000231076" description="3-dehydroquinate synthase">
    <location>
        <begin position="1"/>
        <end position="359"/>
    </location>
</feature>
<feature type="binding site" evidence="1">
    <location>
        <begin position="71"/>
        <end position="76"/>
    </location>
    <ligand>
        <name>NAD(+)</name>
        <dbReference type="ChEBI" id="CHEBI:57540"/>
    </ligand>
</feature>
<feature type="binding site" evidence="1">
    <location>
        <begin position="105"/>
        <end position="109"/>
    </location>
    <ligand>
        <name>NAD(+)</name>
        <dbReference type="ChEBI" id="CHEBI:57540"/>
    </ligand>
</feature>
<feature type="binding site" evidence="1">
    <location>
        <begin position="129"/>
        <end position="130"/>
    </location>
    <ligand>
        <name>NAD(+)</name>
        <dbReference type="ChEBI" id="CHEBI:57540"/>
    </ligand>
</feature>
<feature type="binding site" evidence="1">
    <location>
        <position position="142"/>
    </location>
    <ligand>
        <name>NAD(+)</name>
        <dbReference type="ChEBI" id="CHEBI:57540"/>
    </ligand>
</feature>
<feature type="binding site" evidence="1">
    <location>
        <position position="151"/>
    </location>
    <ligand>
        <name>NAD(+)</name>
        <dbReference type="ChEBI" id="CHEBI:57540"/>
    </ligand>
</feature>
<feature type="binding site" evidence="1">
    <location>
        <position position="184"/>
    </location>
    <ligand>
        <name>Zn(2+)</name>
        <dbReference type="ChEBI" id="CHEBI:29105"/>
    </ligand>
</feature>
<feature type="binding site" evidence="1">
    <location>
        <position position="247"/>
    </location>
    <ligand>
        <name>Zn(2+)</name>
        <dbReference type="ChEBI" id="CHEBI:29105"/>
    </ligand>
</feature>
<feature type="binding site" evidence="1">
    <location>
        <position position="264"/>
    </location>
    <ligand>
        <name>Zn(2+)</name>
        <dbReference type="ChEBI" id="CHEBI:29105"/>
    </ligand>
</feature>
<evidence type="ECO:0000255" key="1">
    <source>
        <dbReference type="HAMAP-Rule" id="MF_00110"/>
    </source>
</evidence>
<organism>
    <name type="scientific">Burkholderia lata (strain ATCC 17760 / DSM 23089 / LMG 22485 / NCIMB 9086 / R18194 / 383)</name>
    <dbReference type="NCBI Taxonomy" id="482957"/>
    <lineage>
        <taxon>Bacteria</taxon>
        <taxon>Pseudomonadati</taxon>
        <taxon>Pseudomonadota</taxon>
        <taxon>Betaproteobacteria</taxon>
        <taxon>Burkholderiales</taxon>
        <taxon>Burkholderiaceae</taxon>
        <taxon>Burkholderia</taxon>
        <taxon>Burkholderia cepacia complex</taxon>
    </lineage>
</organism>
<keyword id="KW-0028">Amino-acid biosynthesis</keyword>
<keyword id="KW-0057">Aromatic amino acid biosynthesis</keyword>
<keyword id="KW-0170">Cobalt</keyword>
<keyword id="KW-0963">Cytoplasm</keyword>
<keyword id="KW-0456">Lyase</keyword>
<keyword id="KW-0479">Metal-binding</keyword>
<keyword id="KW-0520">NAD</keyword>
<keyword id="KW-0547">Nucleotide-binding</keyword>
<keyword id="KW-0862">Zinc</keyword>
<name>AROB_BURL3</name>
<reference key="1">
    <citation type="submission" date="2005-10" db="EMBL/GenBank/DDBJ databases">
        <title>Complete sequence of chromosome 1 of Burkholderia sp. 383.</title>
        <authorList>
            <consortium name="US DOE Joint Genome Institute"/>
            <person name="Copeland A."/>
            <person name="Lucas S."/>
            <person name="Lapidus A."/>
            <person name="Barry K."/>
            <person name="Detter J.C."/>
            <person name="Glavina T."/>
            <person name="Hammon N."/>
            <person name="Israni S."/>
            <person name="Pitluck S."/>
            <person name="Chain P."/>
            <person name="Malfatti S."/>
            <person name="Shin M."/>
            <person name="Vergez L."/>
            <person name="Schmutz J."/>
            <person name="Larimer F."/>
            <person name="Land M."/>
            <person name="Kyrpides N."/>
            <person name="Lykidis A."/>
            <person name="Richardson P."/>
        </authorList>
    </citation>
    <scope>NUCLEOTIDE SEQUENCE [LARGE SCALE GENOMIC DNA]</scope>
    <source>
        <strain>ATCC 17760 / DSM 23089 / LMG 22485 / NCIMB 9086 / R18194 / 383</strain>
    </source>
</reference>
<protein>
    <recommendedName>
        <fullName evidence="1">3-dehydroquinate synthase</fullName>
        <shortName evidence="1">DHQS</shortName>
        <ecNumber evidence="1">4.2.3.4</ecNumber>
    </recommendedName>
</protein>
<proteinExistence type="inferred from homology"/>
<accession>Q39KC4</accession>
<comment type="function">
    <text evidence="1">Catalyzes the conversion of 3-deoxy-D-arabino-heptulosonate 7-phosphate (DAHP) to dehydroquinate (DHQ).</text>
</comment>
<comment type="catalytic activity">
    <reaction evidence="1">
        <text>7-phospho-2-dehydro-3-deoxy-D-arabino-heptonate = 3-dehydroquinate + phosphate</text>
        <dbReference type="Rhea" id="RHEA:21968"/>
        <dbReference type="ChEBI" id="CHEBI:32364"/>
        <dbReference type="ChEBI" id="CHEBI:43474"/>
        <dbReference type="ChEBI" id="CHEBI:58394"/>
        <dbReference type="EC" id="4.2.3.4"/>
    </reaction>
</comment>
<comment type="cofactor">
    <cofactor evidence="1">
        <name>Co(2+)</name>
        <dbReference type="ChEBI" id="CHEBI:48828"/>
    </cofactor>
    <cofactor evidence="1">
        <name>Zn(2+)</name>
        <dbReference type="ChEBI" id="CHEBI:29105"/>
    </cofactor>
    <text evidence="1">Binds 1 divalent metal cation per subunit. Can use either Co(2+) or Zn(2+).</text>
</comment>
<comment type="cofactor">
    <cofactor evidence="1">
        <name>NAD(+)</name>
        <dbReference type="ChEBI" id="CHEBI:57540"/>
    </cofactor>
</comment>
<comment type="pathway">
    <text evidence="1">Metabolic intermediate biosynthesis; chorismate biosynthesis; chorismate from D-erythrose 4-phosphate and phosphoenolpyruvate: step 2/7.</text>
</comment>
<comment type="subcellular location">
    <subcellularLocation>
        <location evidence="1">Cytoplasm</location>
    </subcellularLocation>
</comment>
<comment type="similarity">
    <text evidence="1">Belongs to the sugar phosphate cyclases superfamily. Dehydroquinate synthase family.</text>
</comment>
<sequence length="359" mass="37874">MITVNVDLGDRAYPIHIGAGLIGRAELFAPHIKGSSVTIVTNTTVDPLYGDALRAALAPLGKRVSTVVLPDGEAYKNWETLNLIFDGLLTDRADRKTTLVALGGGVVGDMTGFAAACYMRGVPFIQVPTTLLSQVDSSVGGKTGINHPLGKNMIGAFYQPQAVIADIGALTTLPDRELAAGVAEIIKTGAIADAEFFDWIEANVDALNRRDPAALAHAVKRSCEIKASVVAADEREGGLRAILNFGHTFGHAIEAGLGYGEWLHGEAVGCGMVMAGDLSVRLGLLDEASRQRLDAVIAAAHLPTRGPALGDARYLDLMRVDKKAEAGAIKFILLKRFGDTLITQAPDEAVFATLAQTTH</sequence>